<feature type="chain" id="PRO_0000052052" description="O-methylsterigmatocystin oxidoreductase">
    <location>
        <begin position="1"/>
        <end position="528"/>
    </location>
</feature>
<feature type="binding site" description="axial binding residue" evidence="1">
    <location>
        <position position="440"/>
    </location>
    <ligand>
        <name>heme</name>
        <dbReference type="ChEBI" id="CHEBI:30413"/>
    </ligand>
    <ligandPart>
        <name>Fe</name>
        <dbReference type="ChEBI" id="CHEBI:18248"/>
    </ligandPart>
</feature>
<feature type="sequence variant" description="In strain: ATCC 96044 / SRRC 1273 / AF13.">
    <original>P</original>
    <variation>L</variation>
    <location>
        <position position="423"/>
    </location>
</feature>
<feature type="sequence variant" description="In strain: ATCC 96044 / SRRC 1273 / AF13.">
    <original>D</original>
    <variation>H</variation>
    <location>
        <position position="517"/>
    </location>
</feature>
<name>ORDA_ASPFL</name>
<comment type="function">
    <text evidence="1">Converts O-methylsterigmatocystin (OMST) to aflatoxin B1 and converts dihydro-O-methylsterigmatocystin (DHOMST) to aflatoxin B2 in the aflatoxin biosynthesis pathway.</text>
</comment>
<comment type="catalytic activity">
    <reaction evidence="2">
        <text>8-O-methylsterigmatocystin + 2 reduced [NADPH--hemoprotein reductase] + 2 O2 = aflatoxin B1 + methanol + 2 oxidized [NADPH--hemoprotein reductase] + CO2 + H2O + 2 H(+)</text>
        <dbReference type="Rhea" id="RHEA:35759"/>
        <dbReference type="Rhea" id="RHEA-COMP:11964"/>
        <dbReference type="Rhea" id="RHEA-COMP:11965"/>
        <dbReference type="ChEBI" id="CHEBI:2504"/>
        <dbReference type="ChEBI" id="CHEBI:15377"/>
        <dbReference type="ChEBI" id="CHEBI:15378"/>
        <dbReference type="ChEBI" id="CHEBI:15379"/>
        <dbReference type="ChEBI" id="CHEBI:16526"/>
        <dbReference type="ChEBI" id="CHEBI:17790"/>
        <dbReference type="ChEBI" id="CHEBI:18171"/>
        <dbReference type="ChEBI" id="CHEBI:57618"/>
        <dbReference type="ChEBI" id="CHEBI:58210"/>
        <dbReference type="EC" id="1.14.14.117"/>
    </reaction>
</comment>
<comment type="catalytic activity">
    <reaction evidence="2">
        <text>8-O-methyldihydrosterigmatocystin + 2 reduced [NADPH--hemoprotein reductase] + 2 O2 = aflatoxin B2 + methanol + 2 oxidized [NADPH--hemoprotein reductase] + CO2 + H2O + 2 H(+)</text>
        <dbReference type="Rhea" id="RHEA:35763"/>
        <dbReference type="Rhea" id="RHEA-COMP:11964"/>
        <dbReference type="Rhea" id="RHEA-COMP:11965"/>
        <dbReference type="ChEBI" id="CHEBI:15377"/>
        <dbReference type="ChEBI" id="CHEBI:15378"/>
        <dbReference type="ChEBI" id="CHEBI:15379"/>
        <dbReference type="ChEBI" id="CHEBI:16526"/>
        <dbReference type="ChEBI" id="CHEBI:17790"/>
        <dbReference type="ChEBI" id="CHEBI:48209"/>
        <dbReference type="ChEBI" id="CHEBI:57618"/>
        <dbReference type="ChEBI" id="CHEBI:58210"/>
        <dbReference type="ChEBI" id="CHEBI:72678"/>
        <dbReference type="EC" id="1.14.14.117"/>
    </reaction>
</comment>
<comment type="cofactor">
    <cofactor evidence="1">
        <name>heme</name>
        <dbReference type="ChEBI" id="CHEBI:30413"/>
    </cofactor>
</comment>
<comment type="pathway">
    <text>Mycotoxin biosynthesis; aflatoxin biosynthesis.</text>
</comment>
<comment type="similarity">
    <text evidence="3">Belongs to the cytochrome P450 family.</text>
</comment>
<protein>
    <recommendedName>
        <fullName>O-methylsterigmatocystin oxidoreductase</fullName>
        <shortName>OMST oxidoreductase</shortName>
        <ecNumber evidence="2">1.14.14.117</ecNumber>
    </recommendedName>
    <alternativeName>
        <fullName>Aflatoxin B synthase</fullName>
    </alternativeName>
    <alternativeName>
        <fullName>Aflatoxin biosynthesis protein Q</fullName>
    </alternativeName>
    <alternativeName>
        <fullName>Cytochrome P450 64</fullName>
    </alternativeName>
</protein>
<sequence>MIYSIIICAGALLGLWILEKLLAPKDTRPPLPPGPWRKPIIGNLTDFPPKGTPEWLFWAKHQERYGPMSSLEVMGQTIIMINDAQLGIEIMHKKSALSQMIPDAPFAHMAGWGMSLATERNRQAWKTIRANMKQEIGTRRAISTFHPKMEIGIRRFLLRTLDNPDDLRFHIRKEANAFMMDVAYGYTIAPHGKDELYDLTQQSVRQFSHIFSPGEWSVNFFPILRYVPSWFPGASFQIKAAEYKRTIERMTMVPYLWIKDQVARGCSRPSILLRLLQKGHYESGSHQEQVLVWTNAEFVMGGSDTTVSAVSSFFVAMALYPEVQRKAREELDRVVGPTTLATFEHRSQLPFIDALVKEVFRWHPASPLGAPHITQEDQIWDGYLLPKGALLLPNIWTFTHDPSVYHDPMVFKPERFLEGKDSPPETDPMKFVFGFGRRICPGRFVTDEKLFLIACHAVSCFFISPKDPGAPEPDWLPGVISQPGAFDLNVVPRSPAHEELIRSIETDHPWKNADATDISRFMARNQMI</sequence>
<reference key="1">
    <citation type="journal article" date="2004" name="Appl. Environ. Microbiol.">
        <title>Aflatoxin biosynthesis cluster gene cypA is required for G aflatoxin formation.</title>
        <authorList>
            <person name="Ehrlich K.C."/>
            <person name="Chang P.K."/>
            <person name="Yu J."/>
            <person name="Cotty P.J."/>
        </authorList>
    </citation>
    <scope>NUCLEOTIDE SEQUENCE [GENOMIC DNA]</scope>
    <source>
        <strain>ATCC 96044 / AF13 / SRRC 1273</strain>
    </source>
</reference>
<reference key="2">
    <citation type="journal article" date="2005" name="J. Appl. Microbiol.">
        <title>Aflatoxin biosynthesis gene clusters and flanking regions.</title>
        <authorList>
            <person name="Ehrlich K.C."/>
            <person name="Yu J."/>
            <person name="Cotty P.J."/>
        </authorList>
    </citation>
    <scope>NUCLEOTIDE SEQUENCE [GENOMIC DNA]</scope>
    <source>
        <strain>ATCC 96045 / AF36</strain>
    </source>
</reference>
<keyword id="KW-0349">Heme</keyword>
<keyword id="KW-0408">Iron</keyword>
<keyword id="KW-0479">Metal-binding</keyword>
<keyword id="KW-0503">Monooxygenase</keyword>
<keyword id="KW-0560">Oxidoreductase</keyword>
<proteinExistence type="inferred from homology"/>
<organism>
    <name type="scientific">Aspergillus flavus</name>
    <dbReference type="NCBI Taxonomy" id="5059"/>
    <lineage>
        <taxon>Eukaryota</taxon>
        <taxon>Fungi</taxon>
        <taxon>Dikarya</taxon>
        <taxon>Ascomycota</taxon>
        <taxon>Pezizomycotina</taxon>
        <taxon>Eurotiomycetes</taxon>
        <taxon>Eurotiomycetidae</taxon>
        <taxon>Eurotiales</taxon>
        <taxon>Aspergillaceae</taxon>
        <taxon>Aspergillus</taxon>
        <taxon>Aspergillus subgen. Circumdati</taxon>
    </lineage>
</organism>
<gene>
    <name type="primary">ordA</name>
    <name type="synonym">aflQ</name>
    <name type="synonym">cyp64</name>
    <name type="synonym">ord1</name>
</gene>
<accession>P0CT93</accession>
<accession>P79084</accession>
<accession>Q5J3B9</accession>
<accession>Q5VD88</accession>
<accession>Q5VDD6</accession>
<dbReference type="EC" id="1.14.14.117" evidence="2"/>
<dbReference type="EMBL" id="AY510451">
    <property type="protein sequence ID" value="AAS90105.1"/>
    <property type="molecule type" value="Genomic_DNA"/>
</dbReference>
<dbReference type="EMBL" id="AY510455">
    <property type="protein sequence ID" value="AAS90081.1"/>
    <property type="molecule type" value="Genomic_DNA"/>
</dbReference>
<dbReference type="SMR" id="P0CT93"/>
<dbReference type="EnsemblFungi" id="EED51155">
    <property type="protein sequence ID" value="EED51155"/>
    <property type="gene ID" value="AFLA_139200"/>
</dbReference>
<dbReference type="VEuPathDB" id="FungiDB:AFLA_006290"/>
<dbReference type="VEuPathDB" id="FungiDB:F9C07_7796"/>
<dbReference type="OMA" id="MQWRAMF"/>
<dbReference type="OrthoDB" id="2789670at2759"/>
<dbReference type="UniPathway" id="UPA00287"/>
<dbReference type="GO" id="GO:0140399">
    <property type="term" value="F:aflatoxin B synthase activity"/>
    <property type="evidence" value="ECO:0007669"/>
    <property type="project" value="UniProtKB-EC"/>
</dbReference>
<dbReference type="GO" id="GO:0020037">
    <property type="term" value="F:heme binding"/>
    <property type="evidence" value="ECO:0007669"/>
    <property type="project" value="InterPro"/>
</dbReference>
<dbReference type="GO" id="GO:0005506">
    <property type="term" value="F:iron ion binding"/>
    <property type="evidence" value="ECO:0007669"/>
    <property type="project" value="InterPro"/>
</dbReference>
<dbReference type="CDD" id="cd11065">
    <property type="entry name" value="CYP64-like"/>
    <property type="match status" value="1"/>
</dbReference>
<dbReference type="FunFam" id="1.10.630.10:FF:000116">
    <property type="entry name" value="Oxidoreductase A,oxidoreductase/cytochrome P450 monooxygenase"/>
    <property type="match status" value="1"/>
</dbReference>
<dbReference type="Gene3D" id="1.10.630.10">
    <property type="entry name" value="Cytochrome P450"/>
    <property type="match status" value="1"/>
</dbReference>
<dbReference type="InterPro" id="IPR001128">
    <property type="entry name" value="Cyt_P450"/>
</dbReference>
<dbReference type="InterPro" id="IPR017972">
    <property type="entry name" value="Cyt_P450_CS"/>
</dbReference>
<dbReference type="InterPro" id="IPR002401">
    <property type="entry name" value="Cyt_P450_E_grp-I"/>
</dbReference>
<dbReference type="InterPro" id="IPR036396">
    <property type="entry name" value="Cyt_P450_sf"/>
</dbReference>
<dbReference type="InterPro" id="IPR050364">
    <property type="entry name" value="Cytochrome_P450_fung"/>
</dbReference>
<dbReference type="PANTHER" id="PTHR46300:SF7">
    <property type="entry name" value="P450, PUTATIVE (EUROFUNG)-RELATED"/>
    <property type="match status" value="1"/>
</dbReference>
<dbReference type="PANTHER" id="PTHR46300">
    <property type="entry name" value="P450, PUTATIVE (EUROFUNG)-RELATED-RELATED"/>
    <property type="match status" value="1"/>
</dbReference>
<dbReference type="Pfam" id="PF00067">
    <property type="entry name" value="p450"/>
    <property type="match status" value="1"/>
</dbReference>
<dbReference type="PRINTS" id="PR00463">
    <property type="entry name" value="EP450I"/>
</dbReference>
<dbReference type="SUPFAM" id="SSF48264">
    <property type="entry name" value="Cytochrome P450"/>
    <property type="match status" value="1"/>
</dbReference>
<dbReference type="PROSITE" id="PS00086">
    <property type="entry name" value="CYTOCHROME_P450"/>
    <property type="match status" value="1"/>
</dbReference>
<evidence type="ECO:0000250" key="1"/>
<evidence type="ECO:0000250" key="2">
    <source>
        <dbReference type="UniProtKB" id="B8NHY4"/>
    </source>
</evidence>
<evidence type="ECO:0000305" key="3"/>